<accession>O08812</accession>
<name>CTR3_RAT</name>
<sequence length="619" mass="67525">MLWQALRRFGQKLVRRRLLELGMGETRLARCLSTLDLVALGVGSTLGAGVYVLAGEVAKEKAGPSIVICFLVAALSSVLAGLCYAEFGARVPGSGSAYLYSYVTVGELWAFTTGWNLILSYVIGTASVARAWSSAFDNLIGNHISQTLKGTILLNMPHVLAEYPDFFALALVLLLTGLLVLGANESGLVTKVFTGMNLLVLGFVIISGFIKGELRNWKLTKEDYCLTMSESNGTCSLDSMGSGGFMPFGLEGILRGAATCFYAFVGFDCIATTGEEAQNPQRSIPMGIVISLSICFLAYFGVSSALTLMMPYYKLQPESPLPEAFTYVGWEPARYLVAIGSLCALSTSLLGSMFPMPRVIYAMAEDGLLFRVLARVHNGTHTPIVATVVSGVIAAFMAFLFELTDLVDLMSIGTLLAYSLVSICVLILRYQPDQEMKNGEEEVELQEERTLEAEKLTVQALFCQVDSIPTLLSGRIVYVCSSLLAVLLTVLCLVLTWWTTPLHSGDPVWVTVVVLILGLILGISGVIWRQPQNRTPLHFKVPVVPLLPLVSIFVNVYLMMQMTADTWARFGVWMLIGFAIYFGYGIQHSVEEVKNHQTLPKTRPQTIDLDLTTSCVHSI</sequence>
<feature type="chain" id="PRO_0000054268" description="Cationic amino acid transporter 3">
    <location>
        <begin position="1"/>
        <end position="619"/>
    </location>
</feature>
<feature type="topological domain" description="Cytoplasmic" evidence="3">
    <location>
        <begin position="1"/>
        <end position="36"/>
    </location>
</feature>
<feature type="transmembrane region" description="Helical; Name=1" evidence="3">
    <location>
        <begin position="37"/>
        <end position="57"/>
    </location>
</feature>
<feature type="topological domain" description="Extracellular" evidence="3">
    <location>
        <begin position="58"/>
        <end position="61"/>
    </location>
</feature>
<feature type="transmembrane region" description="Helical; Name=2" evidence="3">
    <location>
        <begin position="62"/>
        <end position="82"/>
    </location>
</feature>
<feature type="topological domain" description="Cytoplasmic" evidence="3">
    <location>
        <begin position="83"/>
        <end position="107"/>
    </location>
</feature>
<feature type="transmembrane region" description="Helical; Name=3" evidence="3">
    <location>
        <begin position="108"/>
        <end position="128"/>
    </location>
</feature>
<feature type="topological domain" description="Extracellular" evidence="3">
    <location>
        <begin position="129"/>
        <end position="162"/>
    </location>
</feature>
<feature type="transmembrane region" description="Helical; Name=4" evidence="3">
    <location>
        <begin position="163"/>
        <end position="183"/>
    </location>
</feature>
<feature type="topological domain" description="Cytoplasmic" evidence="3">
    <location>
        <begin position="184"/>
        <end position="191"/>
    </location>
</feature>
<feature type="transmembrane region" description="Helical; Name=5" evidence="3">
    <location>
        <begin position="192"/>
        <end position="212"/>
    </location>
</feature>
<feature type="topological domain" description="Extracellular" evidence="3">
    <location>
        <begin position="213"/>
        <end position="244"/>
    </location>
</feature>
<feature type="transmembrane region" description="Helical; Name=6" evidence="3">
    <location>
        <begin position="245"/>
        <end position="265"/>
    </location>
</feature>
<feature type="topological domain" description="Cytoplasmic" evidence="3">
    <location>
        <begin position="266"/>
        <end position="285"/>
    </location>
</feature>
<feature type="transmembrane region" description="Helical; Name=7" evidence="3">
    <location>
        <begin position="286"/>
        <end position="306"/>
    </location>
</feature>
<feature type="topological domain" description="Extracellular" evidence="3">
    <location>
        <begin position="307"/>
        <end position="335"/>
    </location>
</feature>
<feature type="transmembrane region" description="Helical; Name=8" evidence="3">
    <location>
        <begin position="336"/>
        <end position="356"/>
    </location>
</feature>
<feature type="topological domain" description="Cytoplasmic" evidence="3">
    <location>
        <begin position="357"/>
        <end position="382"/>
    </location>
</feature>
<feature type="transmembrane region" description="Helical; Name=9" evidence="3">
    <location>
        <begin position="383"/>
        <end position="403"/>
    </location>
</feature>
<feature type="topological domain" description="Extracellular" evidence="3">
    <location>
        <begin position="404"/>
        <end position="406"/>
    </location>
</feature>
<feature type="transmembrane region" description="Helical; Name=10" evidence="3">
    <location>
        <begin position="407"/>
        <end position="427"/>
    </location>
</feature>
<feature type="topological domain" description="Cytoplasmic" evidence="3">
    <location>
        <begin position="428"/>
        <end position="475"/>
    </location>
</feature>
<feature type="transmembrane region" description="Helical; Name=11" evidence="3">
    <location>
        <begin position="476"/>
        <end position="496"/>
    </location>
</feature>
<feature type="topological domain" description="Extracellular" evidence="3">
    <location>
        <begin position="497"/>
        <end position="507"/>
    </location>
</feature>
<feature type="transmembrane region" description="Helical; Name=12" evidence="3">
    <location>
        <begin position="508"/>
        <end position="528"/>
    </location>
</feature>
<feature type="topological domain" description="Cytoplasmic" evidence="3">
    <location>
        <begin position="529"/>
        <end position="540"/>
    </location>
</feature>
<feature type="transmembrane region" description="Helical; Name=13" evidence="3">
    <location>
        <begin position="541"/>
        <end position="561"/>
    </location>
</feature>
<feature type="topological domain" description="Extracellular" evidence="3">
    <location>
        <begin position="562"/>
        <end position="569"/>
    </location>
</feature>
<feature type="transmembrane region" description="Helical; Name=14" evidence="3">
    <location>
        <begin position="570"/>
        <end position="590"/>
    </location>
</feature>
<feature type="topological domain" description="Cytoplasmic" evidence="3">
    <location>
        <begin position="591"/>
        <end position="619"/>
    </location>
</feature>
<feature type="modified residue" description="Phosphothreonine" evidence="2">
    <location>
        <position position="606"/>
    </location>
</feature>
<feature type="modified residue" description="Phosphoserine" evidence="2">
    <location>
        <position position="618"/>
    </location>
</feature>
<feature type="glycosylation site" description="N-linked (GlcNAc...) asparagine" evidence="3">
    <location>
        <position position="232"/>
    </location>
</feature>
<reference key="1">
    <citation type="journal article" date="1997" name="J. Biol. Chem.">
        <title>Cloning and characterization of a brain-specific cationic amino acid transporter.</title>
        <authorList>
            <person name="Hosokawa H."/>
            <person name="Sawamura T."/>
            <person name="Kobayashi S."/>
            <person name="Ninomiya H."/>
            <person name="Miwa S."/>
            <person name="Masaki T."/>
        </authorList>
    </citation>
    <scope>NUCLEOTIDE SEQUENCE [MRNA]</scope>
    <scope>FUNCTION</scope>
    <scope>TRANSPORTER ACTIVITY</scope>
    <scope>ACTIVITY REGULATION</scope>
    <scope>BIOPHYSICOCHEMICAL PROPERTIES</scope>
    <scope>TISSUE SPECIFICITY</scope>
    <source>
        <strain>Wistar</strain>
        <tissue>Brain</tissue>
    </source>
</reference>
<protein>
    <recommendedName>
        <fullName evidence="6">Cationic amino acid transporter 3</fullName>
        <shortName>CAT-3</shortName>
        <shortName evidence="5">CAT3</shortName>
    </recommendedName>
    <alternativeName>
        <fullName>Cationic amino acid transporter y+</fullName>
    </alternativeName>
    <alternativeName>
        <fullName>Solute carrier family 7 member 3</fullName>
    </alternativeName>
</protein>
<proteinExistence type="evidence at protein level"/>
<organism>
    <name type="scientific">Rattus norvegicus</name>
    <name type="common">Rat</name>
    <dbReference type="NCBI Taxonomy" id="10116"/>
    <lineage>
        <taxon>Eukaryota</taxon>
        <taxon>Metazoa</taxon>
        <taxon>Chordata</taxon>
        <taxon>Craniata</taxon>
        <taxon>Vertebrata</taxon>
        <taxon>Euteleostomi</taxon>
        <taxon>Mammalia</taxon>
        <taxon>Eutheria</taxon>
        <taxon>Euarchontoglires</taxon>
        <taxon>Glires</taxon>
        <taxon>Rodentia</taxon>
        <taxon>Myomorpha</taxon>
        <taxon>Muroidea</taxon>
        <taxon>Muridae</taxon>
        <taxon>Murinae</taxon>
        <taxon>Rattus</taxon>
    </lineage>
</organism>
<evidence type="ECO:0000250" key="1"/>
<evidence type="ECO:0000250" key="2">
    <source>
        <dbReference type="UniProtKB" id="Q8WY07"/>
    </source>
</evidence>
<evidence type="ECO:0000255" key="3"/>
<evidence type="ECO:0000269" key="4">
    <source>
    </source>
</evidence>
<evidence type="ECO:0000303" key="5">
    <source>
    </source>
</evidence>
<evidence type="ECO:0000305" key="6"/>
<evidence type="ECO:0000312" key="7">
    <source>
        <dbReference type="RGD" id="68342"/>
    </source>
</evidence>
<comment type="function">
    <text evidence="4">Uniporter that mediates the uptake of cationic L-amino acids such as L-arginine, L-lysine and L-ornithine (PubMed:9079705). The transport is sodium ions- and pH-independent, moderately trans-stimulated and is mediated by passive diffusion (PubMed:9079705).</text>
</comment>
<comment type="catalytic activity">
    <reaction evidence="4">
        <text>L-arginine(in) = L-arginine(out)</text>
        <dbReference type="Rhea" id="RHEA:32143"/>
        <dbReference type="ChEBI" id="CHEBI:32682"/>
    </reaction>
</comment>
<comment type="catalytic activity">
    <reaction evidence="4">
        <text>L-lysine(in) = L-lysine(out)</text>
        <dbReference type="Rhea" id="RHEA:70935"/>
        <dbReference type="ChEBI" id="CHEBI:32551"/>
    </reaction>
</comment>
<comment type="catalytic activity">
    <reaction evidence="4">
        <text>L-ornithine(in) = L-ornithine(out)</text>
        <dbReference type="Rhea" id="RHEA:71199"/>
        <dbReference type="ChEBI" id="CHEBI:46911"/>
    </reaction>
</comment>
<comment type="activity regulation">
    <text evidence="4">Inhibited by high potassium ions-induced membrane depolarization.</text>
</comment>
<comment type="biophysicochemical properties">
    <kinetics>
        <KM evidence="4">103 uM for L-arginine</KM>
        <KM evidence="4">147 uM for L-lysine</KM>
        <KM evidence="4">219 uM for L-ornithine</KM>
    </kinetics>
</comment>
<comment type="subcellular location">
    <subcellularLocation>
        <location evidence="1">Cell membrane</location>
        <topology evidence="1">Multi-pass membrane protein</topology>
    </subcellularLocation>
</comment>
<comment type="tissue specificity">
    <text evidence="4">Highly expressed in brain.</text>
</comment>
<comment type="PTM">
    <text evidence="2">N-glycosylated.</text>
</comment>
<comment type="similarity">
    <text evidence="6">Belongs to the amino acid-polyamine-organocation (APC) superfamily. Cationic amino acid transporter (CAT) (TC 2.A.3.3) family.</text>
</comment>
<keyword id="KW-0029">Amino-acid transport</keyword>
<keyword id="KW-1003">Cell membrane</keyword>
<keyword id="KW-0325">Glycoprotein</keyword>
<keyword id="KW-0472">Membrane</keyword>
<keyword id="KW-0597">Phosphoprotein</keyword>
<keyword id="KW-1185">Reference proteome</keyword>
<keyword id="KW-0812">Transmembrane</keyword>
<keyword id="KW-1133">Transmembrane helix</keyword>
<keyword id="KW-0813">Transport</keyword>
<dbReference type="EMBL" id="AB000113">
    <property type="protein sequence ID" value="BAA20133.1"/>
    <property type="molecule type" value="mRNA"/>
</dbReference>
<dbReference type="RefSeq" id="NP_058913.1">
    <property type="nucleotide sequence ID" value="NM_017217.1"/>
</dbReference>
<dbReference type="SMR" id="O08812"/>
<dbReference type="FunCoup" id="O08812">
    <property type="interactions" value="51"/>
</dbReference>
<dbReference type="STRING" id="10116.ENSRNOP00000068222"/>
<dbReference type="GlyCosmos" id="O08812">
    <property type="glycosylation" value="1 site, No reported glycans"/>
</dbReference>
<dbReference type="GlyGen" id="O08812">
    <property type="glycosylation" value="2 sites"/>
</dbReference>
<dbReference type="PhosphoSitePlus" id="O08812"/>
<dbReference type="PaxDb" id="10116-ENSRNOP00000068222"/>
<dbReference type="GeneID" id="29485"/>
<dbReference type="KEGG" id="rno:29485"/>
<dbReference type="UCSC" id="RGD:68342">
    <property type="organism name" value="rat"/>
</dbReference>
<dbReference type="AGR" id="RGD:68342"/>
<dbReference type="CTD" id="84889"/>
<dbReference type="RGD" id="68342">
    <property type="gene designation" value="Slc7a3"/>
</dbReference>
<dbReference type="eggNOG" id="KOG1286">
    <property type="taxonomic scope" value="Eukaryota"/>
</dbReference>
<dbReference type="InParanoid" id="O08812"/>
<dbReference type="PhylomeDB" id="O08812"/>
<dbReference type="Reactome" id="R-RNO-352230">
    <property type="pathway name" value="Amino acid transport across the plasma membrane"/>
</dbReference>
<dbReference type="PRO" id="PR:O08812"/>
<dbReference type="Proteomes" id="UP000002494">
    <property type="component" value="Unplaced"/>
</dbReference>
<dbReference type="GO" id="GO:0005886">
    <property type="term" value="C:plasma membrane"/>
    <property type="evidence" value="ECO:0000266"/>
    <property type="project" value="RGD"/>
</dbReference>
<dbReference type="GO" id="GO:0015171">
    <property type="term" value="F:amino acid transmembrane transporter activity"/>
    <property type="evidence" value="ECO:0000318"/>
    <property type="project" value="GO_Central"/>
</dbReference>
<dbReference type="GO" id="GO:0015174">
    <property type="term" value="F:basic amino acid transmembrane transporter activity"/>
    <property type="evidence" value="ECO:0000314"/>
    <property type="project" value="RGD"/>
</dbReference>
<dbReference type="GO" id="GO:0061459">
    <property type="term" value="F:L-arginine transmembrane transporter activity"/>
    <property type="evidence" value="ECO:0000314"/>
    <property type="project" value="RGD"/>
</dbReference>
<dbReference type="GO" id="GO:0015189">
    <property type="term" value="F:L-lysine transmembrane transporter activity"/>
    <property type="evidence" value="ECO:0000314"/>
    <property type="project" value="RGD"/>
</dbReference>
<dbReference type="GO" id="GO:0000064">
    <property type="term" value="F:L-ornithine transmembrane transporter activity"/>
    <property type="evidence" value="ECO:0000314"/>
    <property type="project" value="RGD"/>
</dbReference>
<dbReference type="GO" id="GO:0006865">
    <property type="term" value="P:amino acid transport"/>
    <property type="evidence" value="ECO:0000318"/>
    <property type="project" value="GO_Central"/>
</dbReference>
<dbReference type="GO" id="GO:0097638">
    <property type="term" value="P:L-arginine import across plasma membrane"/>
    <property type="evidence" value="ECO:0000266"/>
    <property type="project" value="RGD"/>
</dbReference>
<dbReference type="GO" id="GO:1903826">
    <property type="term" value="P:L-arginine transmembrane transport"/>
    <property type="evidence" value="ECO:0000314"/>
    <property type="project" value="RGD"/>
</dbReference>
<dbReference type="GO" id="GO:0097639">
    <property type="term" value="P:L-lysine import across plasma membrane"/>
    <property type="evidence" value="ECO:0000266"/>
    <property type="project" value="RGD"/>
</dbReference>
<dbReference type="GO" id="GO:1903401">
    <property type="term" value="P:L-lysine transmembrane transport"/>
    <property type="evidence" value="ECO:0000266"/>
    <property type="project" value="RGD"/>
</dbReference>
<dbReference type="GO" id="GO:0097640">
    <property type="term" value="P:L-ornithine import across plasma membrane"/>
    <property type="evidence" value="ECO:0000266"/>
    <property type="project" value="RGD"/>
</dbReference>
<dbReference type="GO" id="GO:0015819">
    <property type="term" value="P:lysine transport"/>
    <property type="evidence" value="ECO:0000314"/>
    <property type="project" value="RGD"/>
</dbReference>
<dbReference type="GO" id="GO:0015822">
    <property type="term" value="P:ornithine transport"/>
    <property type="evidence" value="ECO:0000314"/>
    <property type="project" value="RGD"/>
</dbReference>
<dbReference type="GO" id="GO:0032006">
    <property type="term" value="P:regulation of TOR signaling"/>
    <property type="evidence" value="ECO:0000315"/>
    <property type="project" value="RGD"/>
</dbReference>
<dbReference type="FunFam" id="1.20.1740.10:FF:000024">
    <property type="entry name" value="High affinity cationic amino acid transporter 1"/>
    <property type="match status" value="1"/>
</dbReference>
<dbReference type="FunFam" id="1.20.1740.10:FF:000009">
    <property type="entry name" value="Low affinity cationic amino acid transporter 2"/>
    <property type="match status" value="1"/>
</dbReference>
<dbReference type="Gene3D" id="1.20.1740.10">
    <property type="entry name" value="Amino acid/polyamine transporter I"/>
    <property type="match status" value="1"/>
</dbReference>
<dbReference type="InterPro" id="IPR002293">
    <property type="entry name" value="AA/rel_permease1"/>
</dbReference>
<dbReference type="InterPro" id="IPR004755">
    <property type="entry name" value="Cat_AA_permease"/>
</dbReference>
<dbReference type="InterPro" id="IPR029485">
    <property type="entry name" value="CAT_C"/>
</dbReference>
<dbReference type="NCBIfam" id="TIGR00906">
    <property type="entry name" value="2A0303"/>
    <property type="match status" value="1"/>
</dbReference>
<dbReference type="PANTHER" id="PTHR43243:SF104">
    <property type="entry name" value="CATIONIC AMINO ACID TRANSPORTER 3"/>
    <property type="match status" value="1"/>
</dbReference>
<dbReference type="PANTHER" id="PTHR43243">
    <property type="entry name" value="INNER MEMBRANE TRANSPORTER YGJI-RELATED"/>
    <property type="match status" value="1"/>
</dbReference>
<dbReference type="Pfam" id="PF13520">
    <property type="entry name" value="AA_permease_2"/>
    <property type="match status" value="1"/>
</dbReference>
<dbReference type="Pfam" id="PF13906">
    <property type="entry name" value="AA_permease_C"/>
    <property type="match status" value="1"/>
</dbReference>
<dbReference type="PIRSF" id="PIRSF006060">
    <property type="entry name" value="AA_transporter"/>
    <property type="match status" value="1"/>
</dbReference>
<gene>
    <name evidence="7" type="primary">Slc7a3</name>
    <name type="synonym">Atrc3</name>
    <name type="synonym">Cat3</name>
</gene>